<proteinExistence type="evidence at protein level"/>
<reference key="1">
    <citation type="submission" date="1993-12" db="EMBL/GenBank/DDBJ databases">
        <authorList>
            <person name="Soumillion A."/>
            <person name="van Weyenbergh J."/>
            <person name="de Ley M."/>
        </authorList>
    </citation>
    <scope>NUCLEOTIDE SEQUENCE [MRNA]</scope>
    <source>
        <tissue>Liver</tissue>
    </source>
</reference>
<reference key="2">
    <citation type="submission" date="1993-11" db="UniProtKB">
        <authorList>
            <person name="Hunziker P.E."/>
        </authorList>
    </citation>
    <scope>PROTEIN SEQUENCE</scope>
    <source>
        <tissue>Liver</tissue>
    </source>
</reference>
<reference key="3">
    <citation type="journal article" date="1994" name="Biochim. Biophys. Acta">
        <title>Characterisation of six additional human metallothionein genes.</title>
        <authorList>
            <person name="Stennard F.A."/>
            <person name="Holloway A.F."/>
            <person name="Hamilton J."/>
            <person name="West A.K."/>
        </authorList>
    </citation>
    <scope>NUCLEOTIDE SEQUENCE [GENOMIC DNA]</scope>
    <source>
        <tissue>Placenta</tissue>
    </source>
</reference>
<reference key="4">
    <citation type="journal article" date="2004" name="Nature">
        <title>The sequence and analysis of duplication-rich human chromosome 16.</title>
        <authorList>
            <person name="Martin J."/>
            <person name="Han C."/>
            <person name="Gordon L.A."/>
            <person name="Terry A."/>
            <person name="Prabhakar S."/>
            <person name="She X."/>
            <person name="Xie G."/>
            <person name="Hellsten U."/>
            <person name="Chan Y.M."/>
            <person name="Altherr M."/>
            <person name="Couronne O."/>
            <person name="Aerts A."/>
            <person name="Bajorek E."/>
            <person name="Black S."/>
            <person name="Blumer H."/>
            <person name="Branscomb E."/>
            <person name="Brown N.C."/>
            <person name="Bruno W.J."/>
            <person name="Buckingham J.M."/>
            <person name="Callen D.F."/>
            <person name="Campbell C.S."/>
            <person name="Campbell M.L."/>
            <person name="Campbell E.W."/>
            <person name="Caoile C."/>
            <person name="Challacombe J.F."/>
            <person name="Chasteen L.A."/>
            <person name="Chertkov O."/>
            <person name="Chi H.C."/>
            <person name="Christensen M."/>
            <person name="Clark L.M."/>
            <person name="Cohn J.D."/>
            <person name="Denys M."/>
            <person name="Detter J.C."/>
            <person name="Dickson M."/>
            <person name="Dimitrijevic-Bussod M."/>
            <person name="Escobar J."/>
            <person name="Fawcett J.J."/>
            <person name="Flowers D."/>
            <person name="Fotopulos D."/>
            <person name="Glavina T."/>
            <person name="Gomez M."/>
            <person name="Gonzales E."/>
            <person name="Goodstein D."/>
            <person name="Goodwin L.A."/>
            <person name="Grady D.L."/>
            <person name="Grigoriev I."/>
            <person name="Groza M."/>
            <person name="Hammon N."/>
            <person name="Hawkins T."/>
            <person name="Haydu L."/>
            <person name="Hildebrand C.E."/>
            <person name="Huang W."/>
            <person name="Israni S."/>
            <person name="Jett J."/>
            <person name="Jewett P.B."/>
            <person name="Kadner K."/>
            <person name="Kimball H."/>
            <person name="Kobayashi A."/>
            <person name="Krawczyk M.-C."/>
            <person name="Leyba T."/>
            <person name="Longmire J.L."/>
            <person name="Lopez F."/>
            <person name="Lou Y."/>
            <person name="Lowry S."/>
            <person name="Ludeman T."/>
            <person name="Manohar C.F."/>
            <person name="Mark G.A."/>
            <person name="McMurray K.L."/>
            <person name="Meincke L.J."/>
            <person name="Morgan J."/>
            <person name="Moyzis R.K."/>
            <person name="Mundt M.O."/>
            <person name="Munk A.C."/>
            <person name="Nandkeshwar R.D."/>
            <person name="Pitluck S."/>
            <person name="Pollard M."/>
            <person name="Predki P."/>
            <person name="Parson-Quintana B."/>
            <person name="Ramirez L."/>
            <person name="Rash S."/>
            <person name="Retterer J."/>
            <person name="Ricke D.O."/>
            <person name="Robinson D.L."/>
            <person name="Rodriguez A."/>
            <person name="Salamov A."/>
            <person name="Saunders E.H."/>
            <person name="Scott D."/>
            <person name="Shough T."/>
            <person name="Stallings R.L."/>
            <person name="Stalvey M."/>
            <person name="Sutherland R.D."/>
            <person name="Tapia R."/>
            <person name="Tesmer J.G."/>
            <person name="Thayer N."/>
            <person name="Thompson L.S."/>
            <person name="Tice H."/>
            <person name="Torney D.C."/>
            <person name="Tran-Gyamfi M."/>
            <person name="Tsai M."/>
            <person name="Ulanovsky L.E."/>
            <person name="Ustaszewska A."/>
            <person name="Vo N."/>
            <person name="White P.S."/>
            <person name="Williams A.L."/>
            <person name="Wills P.L."/>
            <person name="Wu J.-R."/>
            <person name="Wu K."/>
            <person name="Yang J."/>
            <person name="DeJong P."/>
            <person name="Bruce D."/>
            <person name="Doggett N.A."/>
            <person name="Deaven L."/>
            <person name="Schmutz J."/>
            <person name="Grimwood J."/>
            <person name="Richardson P."/>
            <person name="Rokhsar D.S."/>
            <person name="Eichler E.E."/>
            <person name="Gilna P."/>
            <person name="Lucas S.M."/>
            <person name="Myers R.M."/>
            <person name="Rubin E.M."/>
            <person name="Pennacchio L.A."/>
        </authorList>
    </citation>
    <scope>NUCLEOTIDE SEQUENCE [LARGE SCALE GENOMIC DNA]</scope>
</reference>
<reference key="5">
    <citation type="journal article" date="2004" name="Genome Res.">
        <title>The status, quality, and expansion of the NIH full-length cDNA project: the Mammalian Gene Collection (MGC).</title>
        <authorList>
            <consortium name="The MGC Project Team"/>
        </authorList>
    </citation>
    <scope>NUCLEOTIDE SEQUENCE [LARGE SCALE MRNA]</scope>
    <source>
        <tissue>Colon</tissue>
    </source>
</reference>
<reference key="6">
    <citation type="journal article" date="1994" name="Eur. J. Biochem.">
        <title>Induction by zinc of specific metallothionein isoforms in human monocytes.</title>
        <authorList>
            <person name="Pauwels M."/>
            <person name="van Weyenbergh J."/>
            <person name="Soumillion A."/>
            <person name="Proost P."/>
            <person name="Ley M."/>
        </authorList>
    </citation>
    <scope>NUCLEOTIDE SEQUENCE [MRNA] OF 1-31</scope>
</reference>
<reference key="7">
    <citation type="journal article" date="2009" name="Anal. Chem.">
        <title>Lys-N and trypsin cover complementary parts of the phosphoproteome in a refined SCX-based approach.</title>
        <authorList>
            <person name="Gauci S."/>
            <person name="Helbig A.O."/>
            <person name="Slijper M."/>
            <person name="Krijgsveld J."/>
            <person name="Heck A.J."/>
            <person name="Mohammed S."/>
        </authorList>
    </citation>
    <scope>ACETYLATION [LARGE SCALE ANALYSIS] AT MET-1</scope>
    <scope>IDENTIFICATION BY MASS SPECTROMETRY [LARGE SCALE ANALYSIS]</scope>
</reference>
<reference key="8">
    <citation type="journal article" date="2012" name="PLoS ONE">
        <title>Microarray-assisted pathway analysis identifies MT1X &amp; NFkappaB as mediators of TCRP1-associated resistance to cisplatin in oral squamous cell carcinoma.</title>
        <authorList>
            <person name="Peng B."/>
            <person name="Gu Y."/>
            <person name="Xiong Y."/>
            <person name="Zheng G."/>
            <person name="He Z."/>
        </authorList>
    </citation>
    <scope>FUNCTION</scope>
    <scope>INTERACTION WITH FAM168A</scope>
</reference>
<evidence type="ECO:0000250" key="1">
    <source>
        <dbReference type="UniProtKB" id="P02795"/>
    </source>
</evidence>
<evidence type="ECO:0000269" key="2">
    <source>
    </source>
</evidence>
<evidence type="ECO:0000305" key="3"/>
<evidence type="ECO:0007744" key="4">
    <source>
    </source>
</evidence>
<keyword id="KW-0007">Acetylation</keyword>
<keyword id="KW-0104">Cadmium</keyword>
<keyword id="KW-0186">Copper</keyword>
<keyword id="KW-0903">Direct protein sequencing</keyword>
<keyword id="KW-0479">Metal-binding</keyword>
<keyword id="KW-0480">Metal-thiolate cluster</keyword>
<keyword id="KW-0597">Phosphoprotein</keyword>
<keyword id="KW-1267">Proteomics identification</keyword>
<keyword id="KW-1185">Reference proteome</keyword>
<keyword id="KW-0862">Zinc</keyword>
<gene>
    <name type="primary">MT1X</name>
</gene>
<organism>
    <name type="scientific">Homo sapiens</name>
    <name type="common">Human</name>
    <dbReference type="NCBI Taxonomy" id="9606"/>
    <lineage>
        <taxon>Eukaryota</taxon>
        <taxon>Metazoa</taxon>
        <taxon>Chordata</taxon>
        <taxon>Craniata</taxon>
        <taxon>Vertebrata</taxon>
        <taxon>Euteleostomi</taxon>
        <taxon>Mammalia</taxon>
        <taxon>Eutheria</taxon>
        <taxon>Euarchontoglires</taxon>
        <taxon>Primates</taxon>
        <taxon>Haplorrhini</taxon>
        <taxon>Catarrhini</taxon>
        <taxon>Hominidae</taxon>
        <taxon>Homo</taxon>
    </lineage>
</organism>
<comment type="function">
    <text evidence="2">Metallothioneins have a high content of cysteine residues that bind various heavy metals; these proteins are transcriptionally regulated by both heavy metals and glucocorticoids. May be involved in FAM168A anti-apoptotic signaling (PubMed:23251525).</text>
</comment>
<comment type="subunit">
    <text evidence="2">Monomer. Interacts with FAM168A (PubMed:23251525).</text>
</comment>
<comment type="interaction">
    <interactant intactId="EBI-11308402">
        <id>P80297</id>
    </interactant>
    <interactant intactId="EBI-12182077">
        <id>Q8N1H7</id>
        <label>SIX6OS1</label>
    </interactant>
    <organismsDiffer>false</organismsDiffer>
    <experiments>3</experiments>
</comment>
<comment type="interaction">
    <interactant intactId="EBI-11308402">
        <id>P80297</id>
    </interactant>
    <interactant intactId="EBI-750109">
        <id>Q9NYB0</id>
        <label>TERF2IP</label>
    </interactant>
    <organismsDiffer>false</organismsDiffer>
    <experiments>2</experiments>
</comment>
<comment type="domain">
    <text>Class I metallothioneins contain 2 metal-binding domains: four divalent ions are chelated within cluster A of the alpha domain and are coordinated via cysteinyl thiolate bridges to 11 cysteine ligands. Cluster B, the corresponding region within the beta domain, can ligate three divalent ions to 9 cysteines.</text>
</comment>
<comment type="similarity">
    <text evidence="3">Belongs to the metallothionein superfamily. Type 1 family.</text>
</comment>
<protein>
    <recommendedName>
        <fullName>Metallothionein-1X</fullName>
        <shortName>MT-1X</shortName>
    </recommendedName>
    <alternativeName>
        <fullName>Metallothionein-IX</fullName>
        <shortName>MT-IX</shortName>
    </alternativeName>
</protein>
<sequence length="61" mass="6068">MDPNCSCSPVGSCACAGSCKCKECKCTSCKKSCCSCCPVGCAKCAQGCICKGTSDKCSCCA</sequence>
<feature type="chain" id="PRO_0000197243" description="Metallothionein-1X">
    <location>
        <begin position="1"/>
        <end position="61"/>
    </location>
</feature>
<feature type="region of interest" description="Beta">
    <location>
        <begin position="1"/>
        <end position="29"/>
    </location>
</feature>
<feature type="region of interest" description="Alpha">
    <location>
        <begin position="30"/>
        <end position="61"/>
    </location>
</feature>
<feature type="binding site" evidence="1">
    <location>
        <position position="5"/>
    </location>
    <ligand>
        <name>a divalent metal cation</name>
        <dbReference type="ChEBI" id="CHEBI:60240"/>
        <label>1</label>
        <note>in cluster B</note>
    </ligand>
</feature>
<feature type="binding site" evidence="1">
    <location>
        <position position="7"/>
    </location>
    <ligand>
        <name>a divalent metal cation</name>
        <dbReference type="ChEBI" id="CHEBI:60240"/>
        <label>1</label>
        <note>in cluster B</note>
    </ligand>
</feature>
<feature type="binding site" evidence="1">
    <location>
        <position position="7"/>
    </location>
    <ligand>
        <name>a divalent metal cation</name>
        <dbReference type="ChEBI" id="CHEBI:60240"/>
        <label>2</label>
        <note>in cluster B</note>
    </ligand>
</feature>
<feature type="binding site" evidence="1">
    <location>
        <position position="13"/>
    </location>
    <ligand>
        <name>a divalent metal cation</name>
        <dbReference type="ChEBI" id="CHEBI:60240"/>
        <label>2</label>
        <note>in cluster B</note>
    </ligand>
</feature>
<feature type="binding site" evidence="1">
    <location>
        <position position="15"/>
    </location>
    <ligand>
        <name>a divalent metal cation</name>
        <dbReference type="ChEBI" id="CHEBI:60240"/>
        <label>2</label>
        <note>in cluster B</note>
    </ligand>
</feature>
<feature type="binding site" evidence="1">
    <location>
        <position position="15"/>
    </location>
    <ligand>
        <name>a divalent metal cation</name>
        <dbReference type="ChEBI" id="CHEBI:60240"/>
        <label>3</label>
        <note>in cluster B</note>
    </ligand>
</feature>
<feature type="binding site" evidence="1">
    <location>
        <position position="19"/>
    </location>
    <ligand>
        <name>a divalent metal cation</name>
        <dbReference type="ChEBI" id="CHEBI:60240"/>
        <label>3</label>
        <note>in cluster B</note>
    </ligand>
</feature>
<feature type="binding site" evidence="1">
    <location>
        <position position="21"/>
    </location>
    <ligand>
        <name>a divalent metal cation</name>
        <dbReference type="ChEBI" id="CHEBI:60240"/>
        <label>1</label>
        <note>in cluster B</note>
    </ligand>
</feature>
<feature type="binding site" evidence="1">
    <location>
        <position position="24"/>
    </location>
    <ligand>
        <name>a divalent metal cation</name>
        <dbReference type="ChEBI" id="CHEBI:60240"/>
        <label>1</label>
        <note>in cluster B</note>
    </ligand>
</feature>
<feature type="binding site" evidence="1">
    <location>
        <position position="24"/>
    </location>
    <ligand>
        <name>a divalent metal cation</name>
        <dbReference type="ChEBI" id="CHEBI:60240"/>
        <label>3</label>
        <note>in cluster B</note>
    </ligand>
</feature>
<feature type="binding site" evidence="1">
    <location>
        <position position="26"/>
    </location>
    <ligand>
        <name>a divalent metal cation</name>
        <dbReference type="ChEBI" id="CHEBI:60240"/>
        <label>2</label>
        <note>in cluster B</note>
    </ligand>
</feature>
<feature type="binding site" evidence="1">
    <location>
        <position position="29"/>
    </location>
    <ligand>
        <name>a divalent metal cation</name>
        <dbReference type="ChEBI" id="CHEBI:60240"/>
        <label>3</label>
        <note>in cluster B</note>
    </ligand>
</feature>
<feature type="binding site" evidence="1">
    <location>
        <position position="33"/>
    </location>
    <ligand>
        <name>a divalent metal cation</name>
        <dbReference type="ChEBI" id="CHEBI:60240"/>
        <label>4</label>
        <note>in cluster A</note>
    </ligand>
</feature>
<feature type="binding site" evidence="1">
    <location>
        <position position="34"/>
    </location>
    <ligand>
        <name>a divalent metal cation</name>
        <dbReference type="ChEBI" id="CHEBI:60240"/>
        <label>4</label>
        <note>in cluster A</note>
    </ligand>
</feature>
<feature type="binding site" evidence="1">
    <location>
        <position position="34"/>
    </location>
    <ligand>
        <name>a divalent metal cation</name>
        <dbReference type="ChEBI" id="CHEBI:60240"/>
        <label>5</label>
        <note>in cluster A</note>
    </ligand>
</feature>
<feature type="binding site" evidence="1">
    <location>
        <position position="36"/>
    </location>
    <ligand>
        <name>a divalent metal cation</name>
        <dbReference type="ChEBI" id="CHEBI:60240"/>
        <label>5</label>
        <note>in cluster A</note>
    </ligand>
</feature>
<feature type="binding site" evidence="1">
    <location>
        <position position="37"/>
    </location>
    <ligand>
        <name>a divalent metal cation</name>
        <dbReference type="ChEBI" id="CHEBI:60240"/>
        <label>5</label>
        <note>in cluster A</note>
    </ligand>
</feature>
<feature type="binding site" evidence="1">
    <location>
        <position position="37"/>
    </location>
    <ligand>
        <name>a divalent metal cation</name>
        <dbReference type="ChEBI" id="CHEBI:60240"/>
        <label>6</label>
        <note>in cluster A</note>
    </ligand>
</feature>
<feature type="binding site" evidence="1">
    <location>
        <position position="41"/>
    </location>
    <ligand>
        <name>a divalent metal cation</name>
        <dbReference type="ChEBI" id="CHEBI:60240"/>
        <label>6</label>
        <note>in cluster A</note>
    </ligand>
</feature>
<feature type="binding site" evidence="1">
    <location>
        <position position="44"/>
    </location>
    <ligand>
        <name>a divalent metal cation</name>
        <dbReference type="ChEBI" id="CHEBI:60240"/>
        <label>4</label>
        <note>in cluster A</note>
    </ligand>
</feature>
<feature type="binding site" evidence="1">
    <location>
        <position position="44"/>
    </location>
    <ligand>
        <name>a divalent metal cation</name>
        <dbReference type="ChEBI" id="CHEBI:60240"/>
        <label>6</label>
        <note>in cluster A</note>
    </ligand>
</feature>
<feature type="binding site" evidence="1">
    <location>
        <position position="48"/>
    </location>
    <ligand>
        <name>a divalent metal cation</name>
        <dbReference type="ChEBI" id="CHEBI:60240"/>
        <label>4</label>
        <note>in cluster A</note>
    </ligand>
</feature>
<feature type="binding site" evidence="1">
    <location>
        <position position="50"/>
    </location>
    <ligand>
        <name>a divalent metal cation</name>
        <dbReference type="ChEBI" id="CHEBI:60240"/>
        <label>5</label>
        <note>in cluster A</note>
    </ligand>
</feature>
<feature type="binding site" evidence="1">
    <location>
        <position position="50"/>
    </location>
    <ligand>
        <name>a divalent metal cation</name>
        <dbReference type="ChEBI" id="CHEBI:60240"/>
        <label>7</label>
        <note>in cluster A</note>
    </ligand>
</feature>
<feature type="binding site" evidence="1">
    <location>
        <position position="57"/>
    </location>
    <ligand>
        <name>a divalent metal cation</name>
        <dbReference type="ChEBI" id="CHEBI:60240"/>
        <label>7</label>
        <note>in cluster A</note>
    </ligand>
</feature>
<feature type="binding site" evidence="1">
    <location>
        <position position="59"/>
    </location>
    <ligand>
        <name>a divalent metal cation</name>
        <dbReference type="ChEBI" id="CHEBI:60240"/>
        <label>7</label>
        <note>in cluster A</note>
    </ligand>
</feature>
<feature type="binding site" evidence="1">
    <location>
        <position position="60"/>
    </location>
    <ligand>
        <name>a divalent metal cation</name>
        <dbReference type="ChEBI" id="CHEBI:60240"/>
        <label>6</label>
        <note>in cluster A</note>
    </ligand>
</feature>
<feature type="binding site" evidence="1">
    <location>
        <position position="60"/>
    </location>
    <ligand>
        <name>a divalent metal cation</name>
        <dbReference type="ChEBI" id="CHEBI:60240"/>
        <label>7</label>
        <note>in cluster A</note>
    </ligand>
</feature>
<feature type="modified residue" description="N-acetylmethionine" evidence="4">
    <location>
        <position position="1"/>
    </location>
</feature>
<feature type="modified residue" description="Phosphoserine" evidence="1">
    <location>
        <position position="58"/>
    </location>
</feature>
<name>MT1X_HUMAN</name>
<dbReference type="EMBL" id="X76717">
    <property type="protein sequence ID" value="CAA54136.1"/>
    <property type="molecule type" value="mRNA"/>
</dbReference>
<dbReference type="EMBL" id="X65607">
    <property type="protein sequence ID" value="CAA46557.1"/>
    <property type="molecule type" value="Genomic_DNA"/>
</dbReference>
<dbReference type="EMBL" id="AC026461">
    <property type="status" value="NOT_ANNOTATED_CDS"/>
    <property type="molecule type" value="Genomic_DNA"/>
</dbReference>
<dbReference type="EMBL" id="BC032338">
    <property type="protein sequence ID" value="AAH32338.1"/>
    <property type="molecule type" value="mRNA"/>
</dbReference>
<dbReference type="EMBL" id="S68956">
    <property type="protein sequence ID" value="AAB30084.1"/>
    <property type="molecule type" value="mRNA"/>
</dbReference>
<dbReference type="CCDS" id="CCDS10768.1"/>
<dbReference type="PIR" id="S47652">
    <property type="entry name" value="S47652"/>
</dbReference>
<dbReference type="RefSeq" id="NP_005943.1">
    <property type="nucleotide sequence ID" value="NM_005952.4"/>
</dbReference>
<dbReference type="SMR" id="P80297"/>
<dbReference type="BioGRID" id="110607">
    <property type="interactions" value="21"/>
</dbReference>
<dbReference type="FunCoup" id="P80297">
    <property type="interactions" value="170"/>
</dbReference>
<dbReference type="IntAct" id="P80297">
    <property type="interactions" value="4"/>
</dbReference>
<dbReference type="STRING" id="9606.ENSP00000377995"/>
<dbReference type="DrugBank" id="DB09130">
    <property type="generic name" value="Copper"/>
</dbReference>
<dbReference type="DrugBank" id="DB12965">
    <property type="generic name" value="Silver"/>
</dbReference>
<dbReference type="GlyGen" id="P80297">
    <property type="glycosylation" value="1 site, 1 O-linked glycan (1 site)"/>
</dbReference>
<dbReference type="iPTMnet" id="P80297"/>
<dbReference type="PhosphoSitePlus" id="P80297"/>
<dbReference type="BioMuta" id="MT1X"/>
<dbReference type="jPOST" id="P80297"/>
<dbReference type="MassIVE" id="P80297"/>
<dbReference type="PaxDb" id="9606-ENSP00000377995"/>
<dbReference type="PeptideAtlas" id="P80297"/>
<dbReference type="ProteomicsDB" id="57676"/>
<dbReference type="Pumba" id="P80297"/>
<dbReference type="TopDownProteomics" id="P80297"/>
<dbReference type="Antibodypedia" id="71776">
    <property type="antibodies" value="36 antibodies from 7 providers"/>
</dbReference>
<dbReference type="DNASU" id="4501"/>
<dbReference type="Ensembl" id="ENST00000394485.5">
    <property type="protein sequence ID" value="ENSP00000377995.4"/>
    <property type="gene ID" value="ENSG00000187193.9"/>
</dbReference>
<dbReference type="GeneID" id="4501"/>
<dbReference type="KEGG" id="hsa:4501"/>
<dbReference type="MANE-Select" id="ENST00000394485.5">
    <property type="protein sequence ID" value="ENSP00000377995.4"/>
    <property type="RefSeq nucleotide sequence ID" value="NM_005952.4"/>
    <property type="RefSeq protein sequence ID" value="NP_005943.1"/>
</dbReference>
<dbReference type="UCSC" id="uc002ejy.4">
    <property type="organism name" value="human"/>
</dbReference>
<dbReference type="AGR" id="HGNC:7405"/>
<dbReference type="CTD" id="4501"/>
<dbReference type="DisGeNET" id="4501"/>
<dbReference type="GeneCards" id="MT1X"/>
<dbReference type="HGNC" id="HGNC:7405">
    <property type="gene designation" value="MT1X"/>
</dbReference>
<dbReference type="HPA" id="ENSG00000187193">
    <property type="expression patterns" value="Tissue enhanced (liver, skeletal muscle)"/>
</dbReference>
<dbReference type="MIM" id="156359">
    <property type="type" value="gene"/>
</dbReference>
<dbReference type="neXtProt" id="NX_P80297"/>
<dbReference type="OpenTargets" id="ENSG00000187193"/>
<dbReference type="PharmGKB" id="PA31213"/>
<dbReference type="VEuPathDB" id="HostDB:ENSG00000187193"/>
<dbReference type="eggNOG" id="KOG4738">
    <property type="taxonomic scope" value="Eukaryota"/>
</dbReference>
<dbReference type="GeneTree" id="ENSGT00950000182967"/>
<dbReference type="HOGENOM" id="CLU_171204_2_0_1"/>
<dbReference type="InParanoid" id="P80297"/>
<dbReference type="OMA" id="DSCTCAN"/>
<dbReference type="PAN-GO" id="P80297">
    <property type="GO annotations" value="8 GO annotations based on evolutionary models"/>
</dbReference>
<dbReference type="PhylomeDB" id="P80297"/>
<dbReference type="TreeFam" id="TF336054"/>
<dbReference type="PathwayCommons" id="P80297"/>
<dbReference type="Reactome" id="R-HSA-5661231">
    <property type="pathway name" value="Metallothioneins bind metals"/>
</dbReference>
<dbReference type="SignaLink" id="P80297"/>
<dbReference type="BioGRID-ORCS" id="4501">
    <property type="hits" value="15 hits in 717 CRISPR screens"/>
</dbReference>
<dbReference type="ChiTaRS" id="MT1X">
    <property type="organism name" value="human"/>
</dbReference>
<dbReference type="GeneWiki" id="MT1X"/>
<dbReference type="GenomeRNAi" id="4501"/>
<dbReference type="Pharos" id="P80297">
    <property type="development level" value="Tbio"/>
</dbReference>
<dbReference type="PRO" id="PR:P80297"/>
<dbReference type="Proteomes" id="UP000005640">
    <property type="component" value="Chromosome 16"/>
</dbReference>
<dbReference type="RNAct" id="P80297">
    <property type="molecule type" value="protein"/>
</dbReference>
<dbReference type="Bgee" id="ENSG00000187193">
    <property type="expression patterns" value="Expressed in pericardium and 207 other cell types or tissues"/>
</dbReference>
<dbReference type="ExpressionAtlas" id="P80297">
    <property type="expression patterns" value="baseline and differential"/>
</dbReference>
<dbReference type="GO" id="GO:0005737">
    <property type="term" value="C:cytoplasm"/>
    <property type="evidence" value="ECO:0000314"/>
    <property type="project" value="UniProtKB"/>
</dbReference>
<dbReference type="GO" id="GO:0005634">
    <property type="term" value="C:nucleus"/>
    <property type="evidence" value="ECO:0000314"/>
    <property type="project" value="UniProtKB"/>
</dbReference>
<dbReference type="GO" id="GO:0046872">
    <property type="term" value="F:metal ion binding"/>
    <property type="evidence" value="ECO:0000318"/>
    <property type="project" value="GO_Central"/>
</dbReference>
<dbReference type="GO" id="GO:0008270">
    <property type="term" value="F:zinc ion binding"/>
    <property type="evidence" value="ECO:0000250"/>
    <property type="project" value="UniProtKB"/>
</dbReference>
<dbReference type="GO" id="GO:0071276">
    <property type="term" value="P:cellular response to cadmium ion"/>
    <property type="evidence" value="ECO:0000270"/>
    <property type="project" value="UniProtKB"/>
</dbReference>
<dbReference type="GO" id="GO:0071280">
    <property type="term" value="P:cellular response to copper ion"/>
    <property type="evidence" value="ECO:0000318"/>
    <property type="project" value="GO_Central"/>
</dbReference>
<dbReference type="GO" id="GO:0036018">
    <property type="term" value="P:cellular response to erythropoietin"/>
    <property type="evidence" value="ECO:0000270"/>
    <property type="project" value="UniProtKB"/>
</dbReference>
<dbReference type="GO" id="GO:0071294">
    <property type="term" value="P:cellular response to zinc ion"/>
    <property type="evidence" value="ECO:0000270"/>
    <property type="project" value="UniProtKB"/>
</dbReference>
<dbReference type="GO" id="GO:0010273">
    <property type="term" value="P:detoxification of copper ion"/>
    <property type="evidence" value="ECO:0000318"/>
    <property type="project" value="GO_Central"/>
</dbReference>
<dbReference type="GO" id="GO:0006882">
    <property type="term" value="P:intracellular zinc ion homeostasis"/>
    <property type="evidence" value="ECO:0000318"/>
    <property type="project" value="GO_Central"/>
</dbReference>
<dbReference type="GO" id="GO:0045926">
    <property type="term" value="P:negative regulation of growth"/>
    <property type="evidence" value="ECO:0000250"/>
    <property type="project" value="UniProtKB"/>
</dbReference>
<dbReference type="GO" id="GO:0010038">
    <property type="term" value="P:response to metal ion"/>
    <property type="evidence" value="ECO:0000304"/>
    <property type="project" value="ProtInc"/>
</dbReference>
<dbReference type="FunFam" id="4.10.10.10:FF:000001">
    <property type="entry name" value="Metallothionein"/>
    <property type="match status" value="1"/>
</dbReference>
<dbReference type="Gene3D" id="4.10.10.10">
    <property type="entry name" value="Metallothionein Isoform II"/>
    <property type="match status" value="1"/>
</dbReference>
<dbReference type="InterPro" id="IPR017854">
    <property type="entry name" value="Metalthion_dom_sf"/>
</dbReference>
<dbReference type="InterPro" id="IPR023587">
    <property type="entry name" value="Metalthion_dom_sf_vert"/>
</dbReference>
<dbReference type="InterPro" id="IPR000006">
    <property type="entry name" value="Metalthion_vert"/>
</dbReference>
<dbReference type="InterPro" id="IPR018064">
    <property type="entry name" value="Metalthion_vert_metal_BS"/>
</dbReference>
<dbReference type="PANTHER" id="PTHR23299">
    <property type="entry name" value="METALLOTHIONEIN"/>
    <property type="match status" value="1"/>
</dbReference>
<dbReference type="PANTHER" id="PTHR23299:SF24">
    <property type="entry name" value="METALLOTHIONEIN-1X"/>
    <property type="match status" value="1"/>
</dbReference>
<dbReference type="Pfam" id="PF00131">
    <property type="entry name" value="Metallothio"/>
    <property type="match status" value="1"/>
</dbReference>
<dbReference type="PRINTS" id="PR00860">
    <property type="entry name" value="MTVERTEBRATE"/>
</dbReference>
<dbReference type="SUPFAM" id="SSF57868">
    <property type="entry name" value="Metallothionein"/>
    <property type="match status" value="1"/>
</dbReference>
<dbReference type="PROSITE" id="PS00203">
    <property type="entry name" value="METALLOTHIONEIN_VRT"/>
    <property type="match status" value="1"/>
</dbReference>
<accession>P80297</accession>
<accession>A8MUC7</accession>